<accession>P56653</accession>
<accession>A5JTM7</accession>
<proteinExistence type="evidence at protein level"/>
<dbReference type="EC" id="3.1.2.23"/>
<dbReference type="EMBL" id="EF569604">
    <property type="protein sequence ID" value="ABQ44580.1"/>
    <property type="molecule type" value="Genomic_DNA"/>
</dbReference>
<dbReference type="PDB" id="1BVQ">
    <property type="method" value="X-ray"/>
    <property type="resolution" value="2.00 A"/>
    <property type="chains" value="A=1-141"/>
</dbReference>
<dbReference type="PDB" id="1LO7">
    <property type="method" value="X-ray"/>
    <property type="resolution" value="1.50 A"/>
    <property type="chains" value="A=1-141"/>
</dbReference>
<dbReference type="PDB" id="1LO8">
    <property type="method" value="X-ray"/>
    <property type="resolution" value="1.80 A"/>
    <property type="chains" value="A=1-141"/>
</dbReference>
<dbReference type="PDB" id="1LO9">
    <property type="method" value="X-ray"/>
    <property type="resolution" value="2.80 A"/>
    <property type="chains" value="A=1-141"/>
</dbReference>
<dbReference type="PDBsum" id="1BVQ"/>
<dbReference type="PDBsum" id="1LO7"/>
<dbReference type="PDBsum" id="1LO8"/>
<dbReference type="PDBsum" id="1LO9"/>
<dbReference type="SMR" id="P56653"/>
<dbReference type="DrugBank" id="DB01652">
    <property type="generic name" value="4-hydroxybenzoyl-CoA"/>
</dbReference>
<dbReference type="DrugBank" id="DB04067">
    <property type="generic name" value="4-hydroxybenzyl coenzyme A"/>
</dbReference>
<dbReference type="DrugBank" id="DB03613">
    <property type="generic name" value="4-hydroxyphenacyl coenzyme A"/>
</dbReference>
<dbReference type="KEGG" id="ag:ABQ44580"/>
<dbReference type="BioCyc" id="MetaCyc:MONOMER-14754"/>
<dbReference type="BRENDA" id="3.1.2.23">
    <property type="organism ID" value="5085"/>
</dbReference>
<dbReference type="SABIO-RK" id="P56653"/>
<dbReference type="UniPathway" id="UPA01011">
    <property type="reaction ID" value="UER01022"/>
</dbReference>
<dbReference type="EvolutionaryTrace" id="P56653"/>
<dbReference type="GO" id="GO:0018739">
    <property type="term" value="F:4-hydroxybenzoyl-CoA thioesterase activity"/>
    <property type="evidence" value="ECO:0000314"/>
    <property type="project" value="UniProtKB"/>
</dbReference>
<dbReference type="CDD" id="cd00586">
    <property type="entry name" value="4HBT"/>
    <property type="match status" value="1"/>
</dbReference>
<dbReference type="Gene3D" id="3.10.129.10">
    <property type="entry name" value="Hotdog Thioesterase"/>
    <property type="match status" value="1"/>
</dbReference>
<dbReference type="InterPro" id="IPR008272">
    <property type="entry name" value="HB-CoA_thioesterase_AS"/>
</dbReference>
<dbReference type="InterPro" id="IPR029069">
    <property type="entry name" value="HotDog_dom_sf"/>
</dbReference>
<dbReference type="Pfam" id="PF13279">
    <property type="entry name" value="4HBT_2"/>
    <property type="match status" value="1"/>
</dbReference>
<dbReference type="SUPFAM" id="SSF54637">
    <property type="entry name" value="Thioesterase/thiol ester dehydrase-isomerase"/>
    <property type="match status" value="1"/>
</dbReference>
<dbReference type="PROSITE" id="PS01328">
    <property type="entry name" value="4HBCOA_THIOESTERASE"/>
    <property type="match status" value="1"/>
</dbReference>
<protein>
    <recommendedName>
        <fullName>4-hydroxybenzoyl-CoA thioesterase</fullName>
        <ecNumber>3.1.2.23</ecNumber>
    </recommendedName>
</protein>
<sequence>MARSITMQQRIEFGDCDPAGIVWFPNYHRWLDAASRNYFIKCGLPPWRQTVVERGIVGTPIVSCNASFVCTASYDDVLTIETCIKEWRRKSFVQRHSVSRTTPGGDVQLVMRADEIRVFAMNDGERLRAIEVPADYIELCS</sequence>
<comment type="function">
    <text evidence="4">Hydrolyzes 4-hydroxybenzoate-CoA, and to a lesser extent benzoyl-CoA and 4-chlorobenzoate-CoA. Not active against aliphatic acyl-CoA thioesters, including palmitoyl-CoA, hexanoyl-CoA and acetyl-CoA.</text>
</comment>
<comment type="catalytic activity">
    <reaction evidence="1 4">
        <text>4-hydroxybenzoyl-CoA + H2O = 4-hydroxybenzoate + CoA + H(+)</text>
        <dbReference type="Rhea" id="RHEA:11948"/>
        <dbReference type="ChEBI" id="CHEBI:15377"/>
        <dbReference type="ChEBI" id="CHEBI:15378"/>
        <dbReference type="ChEBI" id="CHEBI:17879"/>
        <dbReference type="ChEBI" id="CHEBI:57287"/>
        <dbReference type="ChEBI" id="CHEBI:57356"/>
        <dbReference type="EC" id="3.1.2.23"/>
    </reaction>
</comment>
<comment type="activity regulation">
    <text evidence="4">Unaffected by EDTA, Mg(2+), Mn(2+), Fe(2+), Ca(2+), Co(2+) and Zn(2+).</text>
</comment>
<comment type="biophysicochemical properties">
    <kinetics>
        <KM evidence="3 4 5">6 uM for 4-hydroxybenzoyl-CoA</KM>
        <KM evidence="3 4 5">550 uM for 4-chlorobenzoyl-CoA</KM>
        <KM evidence="3 4 5">200 uM for benzoyl-CoA</KM>
        <KM evidence="3 4 5">270 uM for 4-hydroxybenzoyl-pantetheine</KM>
        <KM evidence="3 4 5">56 uM for 4-methoxybenzoyl-CoA</KM>
        <KM evidence="3 4 5">230 uM for 4-methylbenzoyl-CoA</KM>
        <KM evidence="3 4 5">510 uM for benzoyl-CoA</KM>
        <KM evidence="3 4 5">520 uM for 4-fluorobenzoyl-CoA</KM>
        <KM evidence="3 4 5">300 uM for 4-trifluorobenzoyl-CoA</KM>
    </kinetics>
</comment>
<comment type="pathway">
    <text evidence="4">Xenobiotic degradation; 4-chlorobenzoate degradation; 4-hydroxybenzoate from 4-chlorobenzoate: step 3/3.</text>
</comment>
<comment type="subunit">
    <text evidence="2 4 6">Homotetramer.</text>
</comment>
<comment type="similarity">
    <text evidence="7">Belongs to the 4-hydroxybenzoyl-CoA thioesterase family.</text>
</comment>
<name>4HBT_PSEUC</name>
<feature type="chain" id="PRO_0000087760" description="4-hydroxybenzoyl-CoA thioesterase">
    <location>
        <begin position="1"/>
        <end position="141"/>
    </location>
</feature>
<feature type="active site" evidence="1 2 6">
    <location>
        <position position="17"/>
    </location>
</feature>
<feature type="binding site" evidence="2">
    <location>
        <position position="47"/>
    </location>
    <ligand>
        <name>substrate</name>
    </ligand>
</feature>
<feature type="binding site">
    <location>
        <begin position="59"/>
        <end position="61"/>
    </location>
    <ligand>
        <name>substrate</name>
    </ligand>
</feature>
<feature type="binding site" evidence="2">
    <location>
        <position position="90"/>
    </location>
    <ligand>
        <name>substrate</name>
    </ligand>
</feature>
<feature type="mutagenesis site" description="Reduces catalytic activity. Little effect on substrate binding." evidence="3">
    <original>D</original>
    <variation>E</variation>
    <location>
        <position position="17"/>
    </location>
</feature>
<feature type="mutagenesis site" description="Drastically reduces catalytic activity. No effect on substrate binding." evidence="3">
    <original>D</original>
    <variation>N</variation>
    <location>
        <position position="17"/>
    </location>
</feature>
<feature type="mutagenesis site" description="Drastically reduces catalytic activity." evidence="3">
    <original>D</original>
    <variation>S</variation>
    <location>
        <position position="17"/>
    </location>
</feature>
<feature type="mutagenesis site" description="Substrate turnover rate is decreased." evidence="5">
    <original>D</original>
    <variation>S</variation>
    <location>
        <position position="32"/>
    </location>
</feature>
<feature type="mutagenesis site" description="No significant effect on catalytic activity or substrate binding." evidence="3">
    <original>R</original>
    <variation>A</variation>
    <location>
        <position position="88"/>
    </location>
</feature>
<feature type="mutagenesis site" description="No significant effect on catalytic activity or substrate binding." evidence="3">
    <original>R</original>
    <variation>L</variation>
    <location>
        <position position="89"/>
    </location>
</feature>
<feature type="mutagenesis site" description="Decreases substrate binding affinity." evidence="3">
    <original>K</original>
    <variation>A</variation>
    <location>
        <position position="90"/>
    </location>
</feature>
<feature type="mutagenesis site" description="No significant effect on catalytic activity or substrate binding." evidence="3">
    <original>R</original>
    <variation>L</variation>
    <location>
        <position position="126"/>
    </location>
</feature>
<feature type="mutagenesis site" description="No significant effect on catalytic activity or substrate binding." evidence="3">
    <original>R</original>
    <variation>A</variation>
    <location>
        <position position="128"/>
    </location>
</feature>
<feature type="sequence conflict" description="In Ref. 2; ABQ44580." evidence="7" ref="2">
    <original>V</original>
    <variation>L</variation>
    <location>
        <position position="107"/>
    </location>
</feature>
<feature type="strand" evidence="8">
    <location>
        <begin position="4"/>
        <end position="10"/>
    </location>
</feature>
<feature type="helix" evidence="8">
    <location>
        <begin position="13"/>
        <end position="15"/>
    </location>
</feature>
<feature type="strand" evidence="8">
    <location>
        <begin position="20"/>
        <end position="22"/>
    </location>
</feature>
<feature type="helix" evidence="8">
    <location>
        <begin position="25"/>
        <end position="41"/>
    </location>
</feature>
<feature type="helix" evidence="8">
    <location>
        <begin position="47"/>
        <end position="54"/>
    </location>
</feature>
<feature type="strand" evidence="8">
    <location>
        <begin position="56"/>
        <end position="58"/>
    </location>
</feature>
<feature type="strand" evidence="8">
    <location>
        <begin position="61"/>
        <end position="68"/>
    </location>
</feature>
<feature type="strand" evidence="8">
    <location>
        <begin position="77"/>
        <end position="87"/>
    </location>
</feature>
<feature type="strand" evidence="8">
    <location>
        <begin position="89"/>
        <end position="101"/>
    </location>
</feature>
<feature type="strand" evidence="8">
    <location>
        <begin position="107"/>
        <end position="123"/>
    </location>
</feature>
<feature type="strand" evidence="8">
    <location>
        <begin position="126"/>
        <end position="130"/>
    </location>
</feature>
<feature type="helix" evidence="8">
    <location>
        <begin position="134"/>
        <end position="140"/>
    </location>
</feature>
<evidence type="ECO:0000255" key="1">
    <source>
        <dbReference type="PROSITE-ProRule" id="PRU10041"/>
    </source>
</evidence>
<evidence type="ECO:0000269" key="2">
    <source>
    </source>
</evidence>
<evidence type="ECO:0000269" key="3">
    <source>
    </source>
</evidence>
<evidence type="ECO:0000269" key="4">
    <source>
    </source>
</evidence>
<evidence type="ECO:0000269" key="5">
    <source>
    </source>
</evidence>
<evidence type="ECO:0000269" key="6">
    <source>
    </source>
</evidence>
<evidence type="ECO:0000305" key="7"/>
<evidence type="ECO:0007829" key="8">
    <source>
        <dbReference type="PDB" id="1LO7"/>
    </source>
</evidence>
<keyword id="KW-0002">3D-structure</keyword>
<keyword id="KW-0378">Hydrolase</keyword>
<organism>
    <name type="scientific">Pseudomonas sp. (strain CBS-3)</name>
    <dbReference type="NCBI Taxonomy" id="72586"/>
    <lineage>
        <taxon>Bacteria</taxon>
        <taxon>Pseudomonadati</taxon>
        <taxon>Pseudomonadota</taxon>
    </lineage>
</organism>
<reference key="1">
    <citation type="journal article" date="1992" name="Biochemistry">
        <title>Ancestry of the 4-chlorobenzoate dehalogenase: analysis of amino acid sequence identities among families of acyl:adenyl ligases, enoyl-CoA hydratases/isomerases, and acyl-CoA thioesterases.</title>
        <authorList>
            <person name="Babbitt P.C."/>
            <person name="Kenyon G.L."/>
            <person name="Martin B.M."/>
            <person name="Charest H."/>
            <person name="Slyvestre M."/>
            <person name="Scholten J.D."/>
            <person name="Chang K.H."/>
            <person name="Liang P.H."/>
            <person name="Dunaway-Mariano D."/>
        </authorList>
    </citation>
    <scope>NUCLEOTIDE SEQUENCE [GENOMIC DNA]</scope>
</reference>
<reference key="2">
    <citation type="submission" date="2007-04" db="EMBL/GenBank/DDBJ databases">
        <title>The nucleotide sequence upstream and downstream of 4-CBA-CoA ORFs in 9.5 kb Pseudomonas sp. strain CBS 3 chromosomal DNA.</title>
        <authorList>
            <person name="Zhang W."/>
            <person name="Dunaway-Mariano D."/>
        </authorList>
    </citation>
    <scope>NUCLEOTIDE SEQUENCE [GENOMIC DNA]</scope>
</reference>
<reference key="3">
    <citation type="journal article" date="1992" name="Biochemistry">
        <title>Isolation and characterization of the three polypeptide components of 4-chlorobenzoate dehalogenase from Pseudomonas sp. strain CBS-3.</title>
        <authorList>
            <person name="Chang K.H."/>
            <person name="Liang P.H."/>
            <person name="Beck W."/>
            <person name="Scholten J.D."/>
            <person name="Dunaway-Mariano D."/>
        </authorList>
    </citation>
    <scope>FUNCTION</scope>
    <scope>CATALYTIC ACTIVITY</scope>
    <scope>ACTIVITY REGULATION</scope>
    <scope>BIOPHYSICOCHEMICAL PROPERTIES</scope>
    <scope>PATHWAY</scope>
    <scope>SUBUNIT</scope>
</reference>
<reference key="4">
    <citation type="journal article" date="2002" name="Biochemistry">
        <title>Kinetic, Raman, NMR, and site-directed mutagenesis studies of the Pseudomonas sp. strain CBS3 4-hydroxybenzoyl-CoA thioesterase active site.</title>
        <authorList>
            <person name="Zhuang Z."/>
            <person name="Song F."/>
            <person name="Zhang W."/>
            <person name="Taylor K."/>
            <person name="Archambault A."/>
            <person name="Dunaway-Mariano D."/>
            <person name="Dong J."/>
            <person name="Carey P.R."/>
        </authorList>
    </citation>
    <scope>BIOPHYSICOCHEMICAL PROPERTIES</scope>
    <scope>MUTAGENESIS OF ASP-17; ARG-88; ARG-89; LYS-90; ARG-126 AND ARG-128</scope>
</reference>
<reference key="5">
    <citation type="journal article" date="2007" name="Bioorg. Chem.">
        <title>Structure-activity analysis of base and enzyme-catalyzed 4-hydroxybenzoyl coenzyme A hydrolysis.</title>
        <authorList>
            <person name="Song F."/>
            <person name="Zhuang Z."/>
            <person name="Dunaway-Mariano D."/>
        </authorList>
    </citation>
    <scope>BIOPHYSICOCHEMICAL PROPERTIES</scope>
    <scope>MUTAGENESIS OF ASP-32</scope>
</reference>
<reference key="6">
    <citation type="journal article" date="1998" name="J. Biol. Chem.">
        <title>The three-dimensional structure of 4-hydroxybenzoyl-CoA thioesterase from Pseudomonas sp. strain CBS-3.</title>
        <authorList>
            <person name="Benning M.M."/>
            <person name="Wesenberg G."/>
            <person name="Liu R."/>
            <person name="Taylor K.L."/>
            <person name="Dunaway-Mariano D."/>
            <person name="Holden H.M."/>
        </authorList>
    </citation>
    <scope>X-RAY CRYSTALLOGRAPHY (2.0 ANGSTROMS)</scope>
    <scope>SUBUNIT</scope>
    <scope>ACTIVE SITE</scope>
</reference>
<reference key="7">
    <citation type="journal article" date="2002" name="J. Biol. Chem.">
        <title>X-ray crystallographic analyses of inhibitor and substrate complexes of wild-type and mutant 4-hydroxybenzoyl-CoA thioesterase.</title>
        <authorList>
            <person name="Thoden J.B."/>
            <person name="Holden H.M."/>
            <person name="Zhuang Z."/>
            <person name="Dunaway-Mariano D."/>
        </authorList>
    </citation>
    <scope>X-RAY CRYSTALLOGRAPHY (1.5 ANGSTROMS) OF WILD-TYPE IN COMPLEX WITH INHIBITOR AND MUTANT ASN-17 IN COMPLEX WITH SUBSTRATE</scope>
    <scope>SUBUNIT</scope>
    <scope>ACTIVE SITE</scope>
</reference>